<accession>P61202</accession>
<accession>O88950</accession>
<accession>Q15647</accession>
<accession>Q3V1W6</accession>
<accession>Q8R5B0</accession>
<accession>Q9CWU1</accession>
<accession>Q9R249</accession>
<accession>Q9UNQ5</accession>
<dbReference type="EMBL" id="AF087688">
    <property type="protein sequence ID" value="AAC36309.1"/>
    <property type="molecule type" value="mRNA"/>
</dbReference>
<dbReference type="EMBL" id="AF114247">
    <property type="protein sequence ID" value="AAD26162.1"/>
    <property type="molecule type" value="Genomic_DNA"/>
</dbReference>
<dbReference type="EMBL" id="AF114236">
    <property type="protein sequence ID" value="AAD26162.1"/>
    <property type="status" value="JOINED"/>
    <property type="molecule type" value="Genomic_DNA"/>
</dbReference>
<dbReference type="EMBL" id="AF114237">
    <property type="protein sequence ID" value="AAD26162.1"/>
    <property type="status" value="JOINED"/>
    <property type="molecule type" value="Genomic_DNA"/>
</dbReference>
<dbReference type="EMBL" id="AF114238">
    <property type="protein sequence ID" value="AAD26162.1"/>
    <property type="status" value="JOINED"/>
    <property type="molecule type" value="Genomic_DNA"/>
</dbReference>
<dbReference type="EMBL" id="AF114239">
    <property type="protein sequence ID" value="AAD26162.1"/>
    <property type="status" value="JOINED"/>
    <property type="molecule type" value="Genomic_DNA"/>
</dbReference>
<dbReference type="EMBL" id="AF114240">
    <property type="protein sequence ID" value="AAD26162.1"/>
    <property type="status" value="JOINED"/>
    <property type="molecule type" value="Genomic_DNA"/>
</dbReference>
<dbReference type="EMBL" id="AF114241">
    <property type="protein sequence ID" value="AAD26162.1"/>
    <property type="status" value="JOINED"/>
    <property type="molecule type" value="Genomic_DNA"/>
</dbReference>
<dbReference type="EMBL" id="AF114242">
    <property type="protein sequence ID" value="AAD26162.1"/>
    <property type="status" value="JOINED"/>
    <property type="molecule type" value="Genomic_DNA"/>
</dbReference>
<dbReference type="EMBL" id="AF114244">
    <property type="protein sequence ID" value="AAD26162.1"/>
    <property type="status" value="JOINED"/>
    <property type="molecule type" value="Genomic_DNA"/>
</dbReference>
<dbReference type="EMBL" id="AF114245">
    <property type="protein sequence ID" value="AAD26162.1"/>
    <property type="status" value="JOINED"/>
    <property type="molecule type" value="Genomic_DNA"/>
</dbReference>
<dbReference type="EMBL" id="AF114246">
    <property type="protein sequence ID" value="AAD26162.1"/>
    <property type="status" value="JOINED"/>
    <property type="molecule type" value="Genomic_DNA"/>
</dbReference>
<dbReference type="EMBL" id="AK010383">
    <property type="protein sequence ID" value="BAB26900.1"/>
    <property type="molecule type" value="mRNA"/>
</dbReference>
<dbReference type="EMBL" id="AK084421">
    <property type="protein sequence ID" value="BAC39179.1"/>
    <property type="molecule type" value="mRNA"/>
</dbReference>
<dbReference type="EMBL" id="AK132207">
    <property type="protein sequence ID" value="BAE21033.1"/>
    <property type="molecule type" value="mRNA"/>
</dbReference>
<dbReference type="EMBL" id="BC023096">
    <property type="protein sequence ID" value="AAH23096.1"/>
    <property type="status" value="ALT_INIT"/>
    <property type="molecule type" value="mRNA"/>
</dbReference>
<dbReference type="EMBL" id="AF071312">
    <property type="protein sequence ID" value="AAC33899.1"/>
    <property type="molecule type" value="mRNA"/>
</dbReference>
<dbReference type="CCDS" id="CCDS16679.1">
    <molecule id="P61202-1"/>
</dbReference>
<dbReference type="CCDS" id="CCDS71133.1">
    <molecule id="P61202-2"/>
</dbReference>
<dbReference type="RefSeq" id="NP_001272436.1">
    <molecule id="P61202-2"/>
    <property type="nucleotide sequence ID" value="NM_001285507.1"/>
</dbReference>
<dbReference type="RefSeq" id="NP_001272441.1">
    <property type="nucleotide sequence ID" value="NM_001285512.1"/>
</dbReference>
<dbReference type="RefSeq" id="NP_034069.2">
    <molecule id="P61202-1"/>
    <property type="nucleotide sequence ID" value="NM_009939.3"/>
</dbReference>
<dbReference type="SMR" id="P61202"/>
<dbReference type="BioGRID" id="198836">
    <property type="interactions" value="44"/>
</dbReference>
<dbReference type="CORUM" id="P61202"/>
<dbReference type="FunCoup" id="P61202">
    <property type="interactions" value="5238"/>
</dbReference>
<dbReference type="IntAct" id="P61202">
    <property type="interactions" value="1"/>
</dbReference>
<dbReference type="STRING" id="10090.ENSMUSP00000106090"/>
<dbReference type="GlyGen" id="P61202">
    <property type="glycosylation" value="1 site, 1 O-linked glycan (1 site)"/>
</dbReference>
<dbReference type="iPTMnet" id="P61202"/>
<dbReference type="PhosphoSitePlus" id="P61202"/>
<dbReference type="SwissPalm" id="P61202"/>
<dbReference type="jPOST" id="P61202"/>
<dbReference type="PaxDb" id="10090-ENSMUSP00000106090"/>
<dbReference type="PeptideAtlas" id="P61202"/>
<dbReference type="ProteomicsDB" id="285375">
    <molecule id="P61202-1"/>
</dbReference>
<dbReference type="ProteomicsDB" id="285376">
    <molecule id="P61202-2"/>
</dbReference>
<dbReference type="Pumba" id="P61202"/>
<dbReference type="Antibodypedia" id="12106">
    <property type="antibodies" value="415 antibodies from 38 providers"/>
</dbReference>
<dbReference type="DNASU" id="12848"/>
<dbReference type="Ensembl" id="ENSMUST00000028635.6">
    <molecule id="P61202-1"/>
    <property type="protein sequence ID" value="ENSMUSP00000028635.6"/>
    <property type="gene ID" value="ENSMUSG00000027206.14"/>
</dbReference>
<dbReference type="Ensembl" id="ENSMUST00000110463.8">
    <molecule id="P61202-2"/>
    <property type="protein sequence ID" value="ENSMUSP00000106090.2"/>
    <property type="gene ID" value="ENSMUSG00000027206.14"/>
</dbReference>
<dbReference type="GeneID" id="12848"/>
<dbReference type="KEGG" id="mmu:12848"/>
<dbReference type="UCSC" id="uc008mdb.2">
    <molecule id="P61202-1"/>
    <property type="organism name" value="mouse"/>
</dbReference>
<dbReference type="AGR" id="MGI:1330276"/>
<dbReference type="CTD" id="9318"/>
<dbReference type="MGI" id="MGI:1330276">
    <property type="gene designation" value="Cops2"/>
</dbReference>
<dbReference type="VEuPathDB" id="HostDB:ENSMUSG00000027206"/>
<dbReference type="eggNOG" id="KOG1464">
    <property type="taxonomic scope" value="Eukaryota"/>
</dbReference>
<dbReference type="GeneTree" id="ENSGT00530000063301"/>
<dbReference type="HOGENOM" id="CLU_028981_0_1_1"/>
<dbReference type="InParanoid" id="P61202"/>
<dbReference type="OMA" id="SEENWKD"/>
<dbReference type="OrthoDB" id="194139at2759"/>
<dbReference type="TreeFam" id="TF105738"/>
<dbReference type="Reactome" id="R-MMU-5696394">
    <property type="pathway name" value="DNA Damage Recognition in GG-NER"/>
</dbReference>
<dbReference type="Reactome" id="R-MMU-6781823">
    <property type="pathway name" value="Formation of TC-NER Pre-Incision Complex"/>
</dbReference>
<dbReference type="Reactome" id="R-MMU-8856825">
    <property type="pathway name" value="Cargo recognition for clathrin-mediated endocytosis"/>
</dbReference>
<dbReference type="Reactome" id="R-MMU-8951664">
    <property type="pathway name" value="Neddylation"/>
</dbReference>
<dbReference type="Reactome" id="R-MMU-9013422">
    <property type="pathway name" value="RHOBTB1 GTPase cycle"/>
</dbReference>
<dbReference type="BioGRID-ORCS" id="12848">
    <property type="hits" value="17 hits in 80 CRISPR screens"/>
</dbReference>
<dbReference type="ChiTaRS" id="Cops2">
    <property type="organism name" value="mouse"/>
</dbReference>
<dbReference type="PRO" id="PR:P61202"/>
<dbReference type="Proteomes" id="UP000000589">
    <property type="component" value="Chromosome 2"/>
</dbReference>
<dbReference type="RNAct" id="P61202">
    <property type="molecule type" value="protein"/>
</dbReference>
<dbReference type="Bgee" id="ENSMUSG00000027206">
    <property type="expression patterns" value="Expressed in otic placode and 270 other cell types or tissues"/>
</dbReference>
<dbReference type="ExpressionAtlas" id="P61202">
    <property type="expression patterns" value="baseline and differential"/>
</dbReference>
<dbReference type="GO" id="GO:0008180">
    <property type="term" value="C:COP9 signalosome"/>
    <property type="evidence" value="ECO:0000314"/>
    <property type="project" value="MGI"/>
</dbReference>
<dbReference type="GO" id="GO:0005737">
    <property type="term" value="C:cytoplasm"/>
    <property type="evidence" value="ECO:0000250"/>
    <property type="project" value="UniProtKB"/>
</dbReference>
<dbReference type="GO" id="GO:0005634">
    <property type="term" value="C:nucleus"/>
    <property type="evidence" value="ECO:0000314"/>
    <property type="project" value="UniProtKB"/>
</dbReference>
<dbReference type="GO" id="GO:0003714">
    <property type="term" value="F:transcription corepressor activity"/>
    <property type="evidence" value="ECO:0000314"/>
    <property type="project" value="MGI"/>
</dbReference>
<dbReference type="GO" id="GO:0001833">
    <property type="term" value="P:inner cell mass cell proliferation"/>
    <property type="evidence" value="ECO:0000315"/>
    <property type="project" value="MGI"/>
</dbReference>
<dbReference type="GO" id="GO:0045892">
    <property type="term" value="P:negative regulation of DNA-templated transcription"/>
    <property type="evidence" value="ECO:0000314"/>
    <property type="project" value="MGI"/>
</dbReference>
<dbReference type="GO" id="GO:0000122">
    <property type="term" value="P:negative regulation of transcription by RNA polymerase II"/>
    <property type="evidence" value="ECO:0007669"/>
    <property type="project" value="Ensembl"/>
</dbReference>
<dbReference type="GO" id="GO:0030182">
    <property type="term" value="P:neuron differentiation"/>
    <property type="evidence" value="ECO:0007669"/>
    <property type="project" value="Ensembl"/>
</dbReference>
<dbReference type="GO" id="GO:0000338">
    <property type="term" value="P:protein deneddylation"/>
    <property type="evidence" value="ECO:0007669"/>
    <property type="project" value="Ensembl"/>
</dbReference>
<dbReference type="GO" id="GO:0035914">
    <property type="term" value="P:skeletal muscle cell differentiation"/>
    <property type="evidence" value="ECO:0000315"/>
    <property type="project" value="MGI"/>
</dbReference>
<dbReference type="GO" id="GO:0001834">
    <property type="term" value="P:trophectodermal cell proliferation"/>
    <property type="evidence" value="ECO:0000315"/>
    <property type="project" value="MGI"/>
</dbReference>
<dbReference type="FunFam" id="1.25.40.570:FF:000001">
    <property type="entry name" value="Putative cop9 signalosome complex subunit 2"/>
    <property type="match status" value="1"/>
</dbReference>
<dbReference type="Gene3D" id="1.25.40.570">
    <property type="match status" value="1"/>
</dbReference>
<dbReference type="InterPro" id="IPR050871">
    <property type="entry name" value="26S_Proteasome/COP9_Components"/>
</dbReference>
<dbReference type="InterPro" id="IPR000717">
    <property type="entry name" value="PCI_dom"/>
</dbReference>
<dbReference type="InterPro" id="IPR011990">
    <property type="entry name" value="TPR-like_helical_dom_sf"/>
</dbReference>
<dbReference type="InterPro" id="IPR036390">
    <property type="entry name" value="WH_DNA-bd_sf"/>
</dbReference>
<dbReference type="PANTHER" id="PTHR10678">
    <property type="entry name" value="26S PROTEASOME NON-ATPASE REGULATORY SUBUNIT 11/COP9 SIGNALOSOME COMPLEX SUBUNIT 2"/>
    <property type="match status" value="1"/>
</dbReference>
<dbReference type="Pfam" id="PF01399">
    <property type="entry name" value="PCI"/>
    <property type="match status" value="1"/>
</dbReference>
<dbReference type="SMART" id="SM00753">
    <property type="entry name" value="PAM"/>
    <property type="match status" value="1"/>
</dbReference>
<dbReference type="SMART" id="SM00088">
    <property type="entry name" value="PINT"/>
    <property type="match status" value="1"/>
</dbReference>
<dbReference type="SUPFAM" id="SSF48452">
    <property type="entry name" value="TPR-like"/>
    <property type="match status" value="1"/>
</dbReference>
<dbReference type="SUPFAM" id="SSF46785">
    <property type="entry name" value="Winged helix' DNA-binding domain"/>
    <property type="match status" value="1"/>
</dbReference>
<dbReference type="PROSITE" id="PS50250">
    <property type="entry name" value="PCI"/>
    <property type="match status" value="1"/>
</dbReference>
<sequence length="443" mass="51597">MSDMEDDFMCDDEEDYDLEYSEDSNSEPNVDLENQYYNSKALKEDDPKAALSSFQKVLELEGEKGEWGFKALKQMIKINFKLTNFPEMMNRYKQLLTYIRSAVTRNYSEKSINSILDYISTSKQMDLLQEFYETTLEALKDAKNDRLWFKTNTKLGKLYLEREEYGKLQKILRQLHQSCQTDDGEDDLKKGTQLLEIYALEIQMYTAQKNNKKLKALYEQSLHIKSAIPHPLIMGVIRECGGKMHLREGEFEKAHTDFFEAFKNYDESGSPRRTTCLKYLVLANMLMKSGINPFDSQEAKPYKNDPEILAMTNLVSAYQNNDITEFEKILKTNHSNIMDDPFIREHIEELLRNIRTQVLIKLIKPYTRIHIPFISKELNIDVADVESLLVQCILDNTIHGRIDQVNQLLELDHQKRGGARYTALDKWTNQLNSLNQAVVSKLA</sequence>
<name>CSN2_MOUSE</name>
<proteinExistence type="evidence at protein level"/>
<organism>
    <name type="scientific">Mus musculus</name>
    <name type="common">Mouse</name>
    <dbReference type="NCBI Taxonomy" id="10090"/>
    <lineage>
        <taxon>Eukaryota</taxon>
        <taxon>Metazoa</taxon>
        <taxon>Chordata</taxon>
        <taxon>Craniata</taxon>
        <taxon>Vertebrata</taxon>
        <taxon>Euteleostomi</taxon>
        <taxon>Mammalia</taxon>
        <taxon>Eutheria</taxon>
        <taxon>Euarchontoglires</taxon>
        <taxon>Glires</taxon>
        <taxon>Rodentia</taxon>
        <taxon>Myomorpha</taxon>
        <taxon>Muroidea</taxon>
        <taxon>Muridae</taxon>
        <taxon>Murinae</taxon>
        <taxon>Mus</taxon>
        <taxon>Mus</taxon>
    </lineage>
</organism>
<keyword id="KW-0025">Alternative splicing</keyword>
<keyword id="KW-0963">Cytoplasm</keyword>
<keyword id="KW-0539">Nucleus</keyword>
<keyword id="KW-0597">Phosphoprotein</keyword>
<keyword id="KW-1185">Reference proteome</keyword>
<keyword id="KW-0736">Signalosome</keyword>
<gene>
    <name type="primary">Cops2</name>
    <name type="synonym">Csn2</name>
    <name type="synonym">Trip15</name>
</gene>
<reference key="1">
    <citation type="journal article" date="1999" name="Genomics">
        <title>Coding sequence, genomic organization, chromosomal localization, and expression pattern of the signalosome component Cops2: the mouse homologue of Drosophila alien.</title>
        <authorList>
            <person name="Schaefer L."/>
            <person name="Beermann M.L."/>
            <person name="Miller J.B."/>
        </authorList>
    </citation>
    <scope>NUCLEOTIDE SEQUENCE [GENOMIC DNA / MRNA] (ISOFORM 1)</scope>
    <scope>SUBCELLULAR LOCATION</scope>
    <scope>TISSUE SPECIFICITY</scope>
</reference>
<reference key="2">
    <citation type="journal article" date="2005" name="Science">
        <title>The transcriptional landscape of the mammalian genome.</title>
        <authorList>
            <person name="Carninci P."/>
            <person name="Kasukawa T."/>
            <person name="Katayama S."/>
            <person name="Gough J."/>
            <person name="Frith M.C."/>
            <person name="Maeda N."/>
            <person name="Oyama R."/>
            <person name="Ravasi T."/>
            <person name="Lenhard B."/>
            <person name="Wells C."/>
            <person name="Kodzius R."/>
            <person name="Shimokawa K."/>
            <person name="Bajic V.B."/>
            <person name="Brenner S.E."/>
            <person name="Batalov S."/>
            <person name="Forrest A.R."/>
            <person name="Zavolan M."/>
            <person name="Davis M.J."/>
            <person name="Wilming L.G."/>
            <person name="Aidinis V."/>
            <person name="Allen J.E."/>
            <person name="Ambesi-Impiombato A."/>
            <person name="Apweiler R."/>
            <person name="Aturaliya R.N."/>
            <person name="Bailey T.L."/>
            <person name="Bansal M."/>
            <person name="Baxter L."/>
            <person name="Beisel K.W."/>
            <person name="Bersano T."/>
            <person name="Bono H."/>
            <person name="Chalk A.M."/>
            <person name="Chiu K.P."/>
            <person name="Choudhary V."/>
            <person name="Christoffels A."/>
            <person name="Clutterbuck D.R."/>
            <person name="Crowe M.L."/>
            <person name="Dalla E."/>
            <person name="Dalrymple B.P."/>
            <person name="de Bono B."/>
            <person name="Della Gatta G."/>
            <person name="di Bernardo D."/>
            <person name="Down T."/>
            <person name="Engstrom P."/>
            <person name="Fagiolini M."/>
            <person name="Faulkner G."/>
            <person name="Fletcher C.F."/>
            <person name="Fukushima T."/>
            <person name="Furuno M."/>
            <person name="Futaki S."/>
            <person name="Gariboldi M."/>
            <person name="Georgii-Hemming P."/>
            <person name="Gingeras T.R."/>
            <person name="Gojobori T."/>
            <person name="Green R.E."/>
            <person name="Gustincich S."/>
            <person name="Harbers M."/>
            <person name="Hayashi Y."/>
            <person name="Hensch T.K."/>
            <person name="Hirokawa N."/>
            <person name="Hill D."/>
            <person name="Huminiecki L."/>
            <person name="Iacono M."/>
            <person name="Ikeo K."/>
            <person name="Iwama A."/>
            <person name="Ishikawa T."/>
            <person name="Jakt M."/>
            <person name="Kanapin A."/>
            <person name="Katoh M."/>
            <person name="Kawasawa Y."/>
            <person name="Kelso J."/>
            <person name="Kitamura H."/>
            <person name="Kitano H."/>
            <person name="Kollias G."/>
            <person name="Krishnan S.P."/>
            <person name="Kruger A."/>
            <person name="Kummerfeld S.K."/>
            <person name="Kurochkin I.V."/>
            <person name="Lareau L.F."/>
            <person name="Lazarevic D."/>
            <person name="Lipovich L."/>
            <person name="Liu J."/>
            <person name="Liuni S."/>
            <person name="McWilliam S."/>
            <person name="Madan Babu M."/>
            <person name="Madera M."/>
            <person name="Marchionni L."/>
            <person name="Matsuda H."/>
            <person name="Matsuzawa S."/>
            <person name="Miki H."/>
            <person name="Mignone F."/>
            <person name="Miyake S."/>
            <person name="Morris K."/>
            <person name="Mottagui-Tabar S."/>
            <person name="Mulder N."/>
            <person name="Nakano N."/>
            <person name="Nakauchi H."/>
            <person name="Ng P."/>
            <person name="Nilsson R."/>
            <person name="Nishiguchi S."/>
            <person name="Nishikawa S."/>
            <person name="Nori F."/>
            <person name="Ohara O."/>
            <person name="Okazaki Y."/>
            <person name="Orlando V."/>
            <person name="Pang K.C."/>
            <person name="Pavan W.J."/>
            <person name="Pavesi G."/>
            <person name="Pesole G."/>
            <person name="Petrovsky N."/>
            <person name="Piazza S."/>
            <person name="Reed J."/>
            <person name="Reid J.F."/>
            <person name="Ring B.Z."/>
            <person name="Ringwald M."/>
            <person name="Rost B."/>
            <person name="Ruan Y."/>
            <person name="Salzberg S.L."/>
            <person name="Sandelin A."/>
            <person name="Schneider C."/>
            <person name="Schoenbach C."/>
            <person name="Sekiguchi K."/>
            <person name="Semple C.A."/>
            <person name="Seno S."/>
            <person name="Sessa L."/>
            <person name="Sheng Y."/>
            <person name="Shibata Y."/>
            <person name="Shimada H."/>
            <person name="Shimada K."/>
            <person name="Silva D."/>
            <person name="Sinclair B."/>
            <person name="Sperling S."/>
            <person name="Stupka E."/>
            <person name="Sugiura K."/>
            <person name="Sultana R."/>
            <person name="Takenaka Y."/>
            <person name="Taki K."/>
            <person name="Tammoja K."/>
            <person name="Tan S.L."/>
            <person name="Tang S."/>
            <person name="Taylor M.S."/>
            <person name="Tegner J."/>
            <person name="Teichmann S.A."/>
            <person name="Ueda H.R."/>
            <person name="van Nimwegen E."/>
            <person name="Verardo R."/>
            <person name="Wei C.L."/>
            <person name="Yagi K."/>
            <person name="Yamanishi H."/>
            <person name="Zabarovsky E."/>
            <person name="Zhu S."/>
            <person name="Zimmer A."/>
            <person name="Hide W."/>
            <person name="Bult C."/>
            <person name="Grimmond S.M."/>
            <person name="Teasdale R.D."/>
            <person name="Liu E.T."/>
            <person name="Brusic V."/>
            <person name="Quackenbush J."/>
            <person name="Wahlestedt C."/>
            <person name="Mattick J.S."/>
            <person name="Hume D.A."/>
            <person name="Kai C."/>
            <person name="Sasaki D."/>
            <person name="Tomaru Y."/>
            <person name="Fukuda S."/>
            <person name="Kanamori-Katayama M."/>
            <person name="Suzuki M."/>
            <person name="Aoki J."/>
            <person name="Arakawa T."/>
            <person name="Iida J."/>
            <person name="Imamura K."/>
            <person name="Itoh M."/>
            <person name="Kato T."/>
            <person name="Kawaji H."/>
            <person name="Kawagashira N."/>
            <person name="Kawashima T."/>
            <person name="Kojima M."/>
            <person name="Kondo S."/>
            <person name="Konno H."/>
            <person name="Nakano K."/>
            <person name="Ninomiya N."/>
            <person name="Nishio T."/>
            <person name="Okada M."/>
            <person name="Plessy C."/>
            <person name="Shibata K."/>
            <person name="Shiraki T."/>
            <person name="Suzuki S."/>
            <person name="Tagami M."/>
            <person name="Waki K."/>
            <person name="Watahiki A."/>
            <person name="Okamura-Oho Y."/>
            <person name="Suzuki H."/>
            <person name="Kawai J."/>
            <person name="Hayashizaki Y."/>
        </authorList>
    </citation>
    <scope>NUCLEOTIDE SEQUENCE [LARGE SCALE MRNA] (ISOFORMS 1 AND 2)</scope>
    <source>
        <strain>C57BL/6J</strain>
        <tissue>Eye</tissue>
    </source>
</reference>
<reference key="3">
    <citation type="journal article" date="2004" name="Genome Res.">
        <title>The status, quality, and expansion of the NIH full-length cDNA project: the Mammalian Gene Collection (MGC).</title>
        <authorList>
            <consortium name="The MGC Project Team"/>
        </authorList>
    </citation>
    <scope>NUCLEOTIDE SEQUENCE [LARGE SCALE MRNA] OF 2-443 (ISOFORM 1)</scope>
    <source>
        <strain>Czech II</strain>
        <tissue>Mammary tumor</tissue>
    </source>
</reference>
<reference key="4">
    <citation type="journal article" date="1998" name="Curr. Biol.">
        <title>The COP9 complex is conserved between plants and mammals and is related to the 26S proteasome regulatory complex.</title>
        <authorList>
            <person name="Wei N."/>
            <person name="Tsuge T."/>
            <person name="Serino G."/>
            <person name="Dohmae N."/>
            <person name="Takio K."/>
            <person name="Matsui M."/>
            <person name="Deng X.-W."/>
        </authorList>
    </citation>
    <scope>NUCLEOTIDE SEQUENCE [MRNA] OF 4-443 (ISOFORM 1)</scope>
    <scope>IDENTIFICATION IN THE CSN COMPLEX</scope>
    <source>
        <strain>C57BL/6J</strain>
    </source>
</reference>
<reference key="5">
    <citation type="journal article" date="2002" name="Curr. Biol.">
        <title>The COP9 signalosome inhibits p27(kip1) degradation and impedes G1-S phase progression via deneddylation of SCF Cul1.</title>
        <authorList>
            <person name="Yang X."/>
            <person name="Menon S."/>
            <person name="Lykke-Andersen K."/>
            <person name="Tsuge T."/>
            <person name="Xiao D."/>
            <person name="Wang X."/>
            <person name="Rodriguez-Suarez R.J."/>
            <person name="Zhang H."/>
            <person name="Wei N."/>
        </authorList>
    </citation>
    <scope>FUNCTION</scope>
    <scope>INTERACTION WITH CUL1 AND CUL2</scope>
</reference>
<reference key="6">
    <citation type="journal article" date="2003" name="J. Biol. Chem.">
        <title>The role of transcriptional corepressor Nif3l1 in early stage of neural differentiation via cooperation with Trip15/CSN2.</title>
        <authorList>
            <person name="Akiyama H."/>
            <person name="Fujisawa N."/>
            <person name="Tashiro Y."/>
            <person name="Takanabe N."/>
            <person name="Sugiyama A."/>
            <person name="Tashiro F."/>
        </authorList>
    </citation>
    <scope>FUNCTION</scope>
    <scope>INTERACTION WITH NIF3L1</scope>
</reference>
<reference key="7">
    <citation type="journal article" date="2003" name="Mol. Cell. Biol.">
        <title>Disruption of the COP9 signalosome Csn2 subunit in mice causes deficient cell proliferation, accumulation of p53 and cyclin E, and early embryonic death.</title>
        <authorList>
            <person name="Lykke-Andersen K."/>
            <person name="Schaefer L."/>
            <person name="Menon S."/>
            <person name="Deng X.-W."/>
            <person name="Miller J.B."/>
            <person name="Wei N."/>
        </authorList>
    </citation>
    <scope>FUNCTION</scope>
    <scope>DISRUPTION PHENOTYPE</scope>
</reference>
<reference key="8">
    <citation type="journal article" date="2010" name="Cell">
        <title>A tissue-specific atlas of mouse protein phosphorylation and expression.</title>
        <authorList>
            <person name="Huttlin E.L."/>
            <person name="Jedrychowski M.P."/>
            <person name="Elias J.E."/>
            <person name="Goswami T."/>
            <person name="Rad R."/>
            <person name="Beausoleil S.A."/>
            <person name="Villen J."/>
            <person name="Haas W."/>
            <person name="Sowa M.E."/>
            <person name="Gygi S.P."/>
        </authorList>
    </citation>
    <scope>IDENTIFICATION BY MASS SPECTROMETRY [LARGE SCALE ANALYSIS]</scope>
    <source>
        <tissue>Brain</tissue>
        <tissue>Brown adipose tissue</tissue>
        <tissue>Heart</tissue>
        <tissue>Kidney</tissue>
        <tissue>Liver</tissue>
        <tissue>Lung</tissue>
        <tissue>Pancreas</tissue>
        <tissue>Spleen</tissue>
        <tissue>Testis</tissue>
    </source>
</reference>
<evidence type="ECO:0000250" key="1"/>
<evidence type="ECO:0000250" key="2">
    <source>
        <dbReference type="UniProtKB" id="P61201"/>
    </source>
</evidence>
<evidence type="ECO:0000250" key="3">
    <source>
        <dbReference type="UniProtKB" id="P61203"/>
    </source>
</evidence>
<evidence type="ECO:0000255" key="4">
    <source>
        <dbReference type="PROSITE-ProRule" id="PRU01185"/>
    </source>
</evidence>
<evidence type="ECO:0000269" key="5">
    <source>
    </source>
</evidence>
<evidence type="ECO:0000269" key="6">
    <source>
    </source>
</evidence>
<evidence type="ECO:0000269" key="7">
    <source>
    </source>
</evidence>
<evidence type="ECO:0000269" key="8">
    <source>
    </source>
</evidence>
<evidence type="ECO:0000269" key="9">
    <source>
    </source>
</evidence>
<evidence type="ECO:0000303" key="10">
    <source>
    </source>
</evidence>
<evidence type="ECO:0000305" key="11"/>
<comment type="function">
    <text evidence="6 7 8">Essential component of the COP9 signalosome complex (CSN), a complex involved in various cellular and developmental processes. The CSN complex is an essential regulator of the ubiquitin (Ubl) conjugation pathway by mediating the deneddylation of the cullin subunits of SCF-type E3 ligase complexes, leading to decrease the Ubl ligase activity of SCF-type complexes such as SCF, CSA or DDB2. The complex is also involved in phosphorylation of p53/TP53, c-jun/JUN, IkappaBalpha/NFKBIA, ITPK1 and IRF8/ICSBP, possibly via its association with CK2 and PKD kinases. CSN-dependent phosphorylation of TP53 and JUN promotes and protects degradation by the Ubl system, respectively. Involved in early stage of neuronal differentiation via its interaction with NIF3L1.</text>
</comment>
<comment type="subunit">
    <text evidence="2 6 7 9">Component of the CSN complex, composed of COPS1/GPS1, COPS2, COPS3, COPS4, COPS5, COPS6, COPS7 (COPS7A or COPS7B), COPS8 and COPS9 (PubMed:9707402). In the complex, it probably interacts directly with COPS1, COPS4, COPS5, COPS6 and COPS7 (COPS7A or COPS7B) (PubMed:9707402). Specifically interacts with the ligand binding domain of the thyroid receptor (TR). Does not require the presence of thyroid hormone for its interaction. Interacts with CUL1 and CUL2 (PubMed:11967155). Interacts with IRF8/ICSBP1 and with nuclear receptors NR2F1 and NR0B1 (By similarity). Interacts with NIF3L1 (PubMed:12522100).</text>
</comment>
<comment type="subcellular location">
    <subcellularLocation>
        <location evidence="5">Cytoplasm</location>
    </subcellularLocation>
    <subcellularLocation>
        <location evidence="5">Nucleus</location>
    </subcellularLocation>
</comment>
<comment type="alternative products">
    <event type="alternative splicing"/>
    <isoform>
        <id>P61202-1</id>
        <name>1</name>
        <sequence type="displayed"/>
    </isoform>
    <isoform>
        <id>P61202-2</id>
        <name>2</name>
        <sequence type="described" ref="VSP_011885"/>
    </isoform>
</comment>
<comment type="tissue specificity">
    <text evidence="5">Widely expressed in embryonic, fetal and adult tissues, except cartilage and smooth muscle.</text>
</comment>
<comment type="PTM">
    <text evidence="1">Phosphorylated by CK2 and PKD kinases.</text>
</comment>
<comment type="disruption phenotype">
    <text evidence="8">Its absence causes arrest of embryo development at the peri-implantation stage. Blastocysts without Cops2 fail to outgrow in culture and exhibit a cell proliferation defect in inner cell mass, accompanied by a slight decrease in Oct4. In addition, lack of Cops2 disrupts the CSN complex and results in a drastic increase in cyclin E. It also induces elevated levels of p53 and p21, which may contribute to premature cell cycle arrest of the mutant.</text>
</comment>
<comment type="similarity">
    <text evidence="11">Belongs to the CSN2 family.</text>
</comment>
<comment type="sequence caution" evidence="11">
    <conflict type="erroneous initiation">
        <sequence resource="EMBL-CDS" id="AAH23096"/>
    </conflict>
</comment>
<protein>
    <recommendedName>
        <fullName>COP9 signalosome complex subunit 2</fullName>
        <shortName>SGN2</shortName>
        <shortName>Signalosome subunit 2</shortName>
    </recommendedName>
    <alternativeName>
        <fullName>Alien homolog</fullName>
    </alternativeName>
    <alternativeName>
        <fullName>JAB1-containing signalosome subunit 2</fullName>
    </alternativeName>
    <alternativeName>
        <fullName>Thyroid receptor-interacting protein 15</fullName>
        <shortName>TR-interacting protein 15</shortName>
        <shortName>TRIP-15</shortName>
    </alternativeName>
</protein>
<feature type="chain" id="PRO_0000120969" description="COP9 signalosome complex subunit 2">
    <location>
        <begin position="1"/>
        <end position="443"/>
    </location>
</feature>
<feature type="domain" description="PCI" evidence="4">
    <location>
        <begin position="254"/>
        <end position="416"/>
    </location>
</feature>
<feature type="region of interest" description="Mediates interaction with NIF3L1" evidence="3">
    <location>
        <begin position="1"/>
        <end position="275"/>
    </location>
</feature>
<feature type="splice variant" id="VSP_011885" description="In isoform 2." evidence="10">
    <original>Q</original>
    <variation>QNSDFLCQ</variation>
    <location>
        <position position="124"/>
    </location>
</feature>
<feature type="sequence conflict" description="In Ref. 2; BAB26900." evidence="11" ref="2">
    <original>K</original>
    <variation>Y</variation>
    <location>
        <position position="40"/>
    </location>
</feature>
<feature type="sequence conflict" description="In Ref. 2; BAB26900." evidence="11" ref="2">
    <original>S</original>
    <variation>T</variation>
    <location>
        <position position="52"/>
    </location>
</feature>
<feature type="sequence conflict" description="In Ref. 3; AAH23096." evidence="11" ref="3">
    <original>R</original>
    <variation>K</variation>
    <location>
        <position position="344"/>
    </location>
</feature>